<dbReference type="EC" id="1.1.1.94" evidence="1"/>
<dbReference type="EMBL" id="CU207211">
    <property type="protein sequence ID" value="CAL63080.1"/>
    <property type="molecule type" value="Genomic_DNA"/>
</dbReference>
<dbReference type="SMR" id="A4G993"/>
<dbReference type="STRING" id="204773.HEAR2970"/>
<dbReference type="KEGG" id="har:HEAR2970"/>
<dbReference type="eggNOG" id="COG0240">
    <property type="taxonomic scope" value="Bacteria"/>
</dbReference>
<dbReference type="HOGENOM" id="CLU_033449_0_2_4"/>
<dbReference type="OrthoDB" id="9812273at2"/>
<dbReference type="UniPathway" id="UPA00940"/>
<dbReference type="Proteomes" id="UP000006697">
    <property type="component" value="Chromosome"/>
</dbReference>
<dbReference type="GO" id="GO:0005829">
    <property type="term" value="C:cytosol"/>
    <property type="evidence" value="ECO:0007669"/>
    <property type="project" value="TreeGrafter"/>
</dbReference>
<dbReference type="GO" id="GO:0047952">
    <property type="term" value="F:glycerol-3-phosphate dehydrogenase [NAD(P)+] activity"/>
    <property type="evidence" value="ECO:0007669"/>
    <property type="project" value="UniProtKB-UniRule"/>
</dbReference>
<dbReference type="GO" id="GO:0051287">
    <property type="term" value="F:NAD binding"/>
    <property type="evidence" value="ECO:0007669"/>
    <property type="project" value="InterPro"/>
</dbReference>
<dbReference type="GO" id="GO:0005975">
    <property type="term" value="P:carbohydrate metabolic process"/>
    <property type="evidence" value="ECO:0007669"/>
    <property type="project" value="InterPro"/>
</dbReference>
<dbReference type="GO" id="GO:0046167">
    <property type="term" value="P:glycerol-3-phosphate biosynthetic process"/>
    <property type="evidence" value="ECO:0007669"/>
    <property type="project" value="UniProtKB-UniRule"/>
</dbReference>
<dbReference type="GO" id="GO:0046168">
    <property type="term" value="P:glycerol-3-phosphate catabolic process"/>
    <property type="evidence" value="ECO:0007669"/>
    <property type="project" value="InterPro"/>
</dbReference>
<dbReference type="GO" id="GO:0006650">
    <property type="term" value="P:glycerophospholipid metabolic process"/>
    <property type="evidence" value="ECO:0007669"/>
    <property type="project" value="UniProtKB-UniRule"/>
</dbReference>
<dbReference type="GO" id="GO:0008654">
    <property type="term" value="P:phospholipid biosynthetic process"/>
    <property type="evidence" value="ECO:0007669"/>
    <property type="project" value="UniProtKB-KW"/>
</dbReference>
<dbReference type="FunFam" id="1.10.1040.10:FF:000001">
    <property type="entry name" value="Glycerol-3-phosphate dehydrogenase [NAD(P)+]"/>
    <property type="match status" value="1"/>
</dbReference>
<dbReference type="FunFam" id="3.40.50.720:FF:000019">
    <property type="entry name" value="Glycerol-3-phosphate dehydrogenase [NAD(P)+]"/>
    <property type="match status" value="1"/>
</dbReference>
<dbReference type="Gene3D" id="1.10.1040.10">
    <property type="entry name" value="N-(1-d-carboxylethyl)-l-norvaline Dehydrogenase, domain 2"/>
    <property type="match status" value="1"/>
</dbReference>
<dbReference type="Gene3D" id="3.40.50.720">
    <property type="entry name" value="NAD(P)-binding Rossmann-like Domain"/>
    <property type="match status" value="1"/>
</dbReference>
<dbReference type="HAMAP" id="MF_00394">
    <property type="entry name" value="NAD_Glyc3P_dehydrog"/>
    <property type="match status" value="1"/>
</dbReference>
<dbReference type="InterPro" id="IPR008927">
    <property type="entry name" value="6-PGluconate_DH-like_C_sf"/>
</dbReference>
<dbReference type="InterPro" id="IPR013328">
    <property type="entry name" value="6PGD_dom2"/>
</dbReference>
<dbReference type="InterPro" id="IPR006168">
    <property type="entry name" value="G3P_DH_NAD-dep"/>
</dbReference>
<dbReference type="InterPro" id="IPR006109">
    <property type="entry name" value="G3P_DH_NAD-dep_C"/>
</dbReference>
<dbReference type="InterPro" id="IPR011128">
    <property type="entry name" value="G3P_DH_NAD-dep_N"/>
</dbReference>
<dbReference type="InterPro" id="IPR036291">
    <property type="entry name" value="NAD(P)-bd_dom_sf"/>
</dbReference>
<dbReference type="NCBIfam" id="NF000940">
    <property type="entry name" value="PRK00094.1-2"/>
    <property type="match status" value="1"/>
</dbReference>
<dbReference type="NCBIfam" id="NF000942">
    <property type="entry name" value="PRK00094.1-4"/>
    <property type="match status" value="1"/>
</dbReference>
<dbReference type="PANTHER" id="PTHR11728">
    <property type="entry name" value="GLYCEROL-3-PHOSPHATE DEHYDROGENASE"/>
    <property type="match status" value="1"/>
</dbReference>
<dbReference type="PANTHER" id="PTHR11728:SF1">
    <property type="entry name" value="GLYCEROL-3-PHOSPHATE DEHYDROGENASE [NAD(+)] 2, CHLOROPLASTIC"/>
    <property type="match status" value="1"/>
</dbReference>
<dbReference type="Pfam" id="PF07479">
    <property type="entry name" value="NAD_Gly3P_dh_C"/>
    <property type="match status" value="1"/>
</dbReference>
<dbReference type="Pfam" id="PF01210">
    <property type="entry name" value="NAD_Gly3P_dh_N"/>
    <property type="match status" value="1"/>
</dbReference>
<dbReference type="PIRSF" id="PIRSF000114">
    <property type="entry name" value="Glycerol-3-P_dh"/>
    <property type="match status" value="1"/>
</dbReference>
<dbReference type="PRINTS" id="PR00077">
    <property type="entry name" value="GPDHDRGNASE"/>
</dbReference>
<dbReference type="SUPFAM" id="SSF48179">
    <property type="entry name" value="6-phosphogluconate dehydrogenase C-terminal domain-like"/>
    <property type="match status" value="1"/>
</dbReference>
<dbReference type="SUPFAM" id="SSF51735">
    <property type="entry name" value="NAD(P)-binding Rossmann-fold domains"/>
    <property type="match status" value="1"/>
</dbReference>
<dbReference type="PROSITE" id="PS00957">
    <property type="entry name" value="NAD_G3PDH"/>
    <property type="match status" value="1"/>
</dbReference>
<organism>
    <name type="scientific">Herminiimonas arsenicoxydans</name>
    <dbReference type="NCBI Taxonomy" id="204773"/>
    <lineage>
        <taxon>Bacteria</taxon>
        <taxon>Pseudomonadati</taxon>
        <taxon>Pseudomonadota</taxon>
        <taxon>Betaproteobacteria</taxon>
        <taxon>Burkholderiales</taxon>
        <taxon>Oxalobacteraceae</taxon>
        <taxon>Herminiimonas</taxon>
    </lineage>
</organism>
<keyword id="KW-0963">Cytoplasm</keyword>
<keyword id="KW-0444">Lipid biosynthesis</keyword>
<keyword id="KW-0443">Lipid metabolism</keyword>
<keyword id="KW-0520">NAD</keyword>
<keyword id="KW-0521">NADP</keyword>
<keyword id="KW-0547">Nucleotide-binding</keyword>
<keyword id="KW-0560">Oxidoreductase</keyword>
<keyword id="KW-0594">Phospholipid biosynthesis</keyword>
<keyword id="KW-1208">Phospholipid metabolism</keyword>
<keyword id="KW-1185">Reference proteome</keyword>
<comment type="function">
    <text evidence="1">Catalyzes the reduction of the glycolytic intermediate dihydroxyacetone phosphate (DHAP) to sn-glycerol 3-phosphate (G3P), the key precursor for phospholipid synthesis.</text>
</comment>
<comment type="catalytic activity">
    <reaction evidence="1">
        <text>sn-glycerol 3-phosphate + NAD(+) = dihydroxyacetone phosphate + NADH + H(+)</text>
        <dbReference type="Rhea" id="RHEA:11092"/>
        <dbReference type="ChEBI" id="CHEBI:15378"/>
        <dbReference type="ChEBI" id="CHEBI:57540"/>
        <dbReference type="ChEBI" id="CHEBI:57597"/>
        <dbReference type="ChEBI" id="CHEBI:57642"/>
        <dbReference type="ChEBI" id="CHEBI:57945"/>
        <dbReference type="EC" id="1.1.1.94"/>
    </reaction>
    <physiologicalReaction direction="right-to-left" evidence="1">
        <dbReference type="Rhea" id="RHEA:11094"/>
    </physiologicalReaction>
</comment>
<comment type="catalytic activity">
    <reaction evidence="1">
        <text>sn-glycerol 3-phosphate + NADP(+) = dihydroxyacetone phosphate + NADPH + H(+)</text>
        <dbReference type="Rhea" id="RHEA:11096"/>
        <dbReference type="ChEBI" id="CHEBI:15378"/>
        <dbReference type="ChEBI" id="CHEBI:57597"/>
        <dbReference type="ChEBI" id="CHEBI:57642"/>
        <dbReference type="ChEBI" id="CHEBI:57783"/>
        <dbReference type="ChEBI" id="CHEBI:58349"/>
        <dbReference type="EC" id="1.1.1.94"/>
    </reaction>
    <physiologicalReaction direction="right-to-left" evidence="1">
        <dbReference type="Rhea" id="RHEA:11098"/>
    </physiologicalReaction>
</comment>
<comment type="pathway">
    <text evidence="1">Membrane lipid metabolism; glycerophospholipid metabolism.</text>
</comment>
<comment type="subcellular location">
    <subcellularLocation>
        <location evidence="1">Cytoplasm</location>
    </subcellularLocation>
</comment>
<comment type="similarity">
    <text evidence="1">Belongs to the NAD-dependent glycerol-3-phosphate dehydrogenase family.</text>
</comment>
<proteinExistence type="inferred from homology"/>
<accession>A4G993</accession>
<reference key="1">
    <citation type="journal article" date="2007" name="PLoS Genet.">
        <title>A tale of two oxidation states: bacterial colonization of arsenic-rich environments.</title>
        <authorList>
            <person name="Muller D."/>
            <person name="Medigue C."/>
            <person name="Koechler S."/>
            <person name="Barbe V."/>
            <person name="Barakat M."/>
            <person name="Talla E."/>
            <person name="Bonnefoy V."/>
            <person name="Krin E."/>
            <person name="Arsene-Ploetze F."/>
            <person name="Carapito C."/>
            <person name="Chandler M."/>
            <person name="Cournoyer B."/>
            <person name="Cruveiller S."/>
            <person name="Dossat C."/>
            <person name="Duval S."/>
            <person name="Heymann M."/>
            <person name="Leize E."/>
            <person name="Lieutaud A."/>
            <person name="Lievremont D."/>
            <person name="Makita Y."/>
            <person name="Mangenot S."/>
            <person name="Nitschke W."/>
            <person name="Ortet P."/>
            <person name="Perdrial N."/>
            <person name="Schoepp B."/>
            <person name="Siguier P."/>
            <person name="Simeonova D.D."/>
            <person name="Rouy Z."/>
            <person name="Segurens B."/>
            <person name="Turlin E."/>
            <person name="Vallenet D."/>
            <person name="van Dorsselaer A."/>
            <person name="Weiss S."/>
            <person name="Weissenbach J."/>
            <person name="Lett M.-C."/>
            <person name="Danchin A."/>
            <person name="Bertin P.N."/>
        </authorList>
    </citation>
    <scope>NUCLEOTIDE SEQUENCE [LARGE SCALE GENOMIC DNA]</scope>
    <source>
        <strain>ULPAs1</strain>
    </source>
</reference>
<evidence type="ECO:0000255" key="1">
    <source>
        <dbReference type="HAMAP-Rule" id="MF_00394"/>
    </source>
</evidence>
<name>GPDA_HERAR</name>
<protein>
    <recommendedName>
        <fullName evidence="1">Glycerol-3-phosphate dehydrogenase [NAD(P)+]</fullName>
        <ecNumber evidence="1">1.1.1.94</ecNumber>
    </recommendedName>
    <alternativeName>
        <fullName evidence="1">NAD(P)(+)-dependent glycerol-3-phosphate dehydrogenase</fullName>
    </alternativeName>
    <alternativeName>
        <fullName evidence="1">NAD(P)H-dependent dihydroxyacetone-phosphate reductase</fullName>
    </alternativeName>
</protein>
<gene>
    <name evidence="1" type="primary">gpsA</name>
    <name type="ordered locus">HEAR2970</name>
</gene>
<feature type="chain" id="PRO_1000049512" description="Glycerol-3-phosphate dehydrogenase [NAD(P)+]">
    <location>
        <begin position="1"/>
        <end position="331"/>
    </location>
</feature>
<feature type="active site" description="Proton acceptor" evidence="1">
    <location>
        <position position="189"/>
    </location>
</feature>
<feature type="binding site" evidence="1">
    <location>
        <position position="11"/>
    </location>
    <ligand>
        <name>NADPH</name>
        <dbReference type="ChEBI" id="CHEBI:57783"/>
    </ligand>
</feature>
<feature type="binding site" evidence="1">
    <location>
        <position position="30"/>
    </location>
    <ligand>
        <name>NADPH</name>
        <dbReference type="ChEBI" id="CHEBI:57783"/>
    </ligand>
</feature>
<feature type="binding site" evidence="1">
    <location>
        <position position="105"/>
    </location>
    <ligand>
        <name>NADPH</name>
        <dbReference type="ChEBI" id="CHEBI:57783"/>
    </ligand>
</feature>
<feature type="binding site" evidence="1">
    <location>
        <position position="105"/>
    </location>
    <ligand>
        <name>sn-glycerol 3-phosphate</name>
        <dbReference type="ChEBI" id="CHEBI:57597"/>
    </ligand>
</feature>
<feature type="binding site" evidence="1">
    <location>
        <position position="134"/>
    </location>
    <ligand>
        <name>sn-glycerol 3-phosphate</name>
        <dbReference type="ChEBI" id="CHEBI:57597"/>
    </ligand>
</feature>
<feature type="binding site" evidence="1">
    <location>
        <position position="136"/>
    </location>
    <ligand>
        <name>sn-glycerol 3-phosphate</name>
        <dbReference type="ChEBI" id="CHEBI:57597"/>
    </ligand>
</feature>
<feature type="binding site" evidence="1">
    <location>
        <position position="138"/>
    </location>
    <ligand>
        <name>NADPH</name>
        <dbReference type="ChEBI" id="CHEBI:57783"/>
    </ligand>
</feature>
<feature type="binding site" evidence="1">
    <location>
        <position position="189"/>
    </location>
    <ligand>
        <name>sn-glycerol 3-phosphate</name>
        <dbReference type="ChEBI" id="CHEBI:57597"/>
    </ligand>
</feature>
<feature type="binding site" evidence="1">
    <location>
        <position position="242"/>
    </location>
    <ligand>
        <name>sn-glycerol 3-phosphate</name>
        <dbReference type="ChEBI" id="CHEBI:57597"/>
    </ligand>
</feature>
<feature type="binding site" evidence="1">
    <location>
        <position position="252"/>
    </location>
    <ligand>
        <name>sn-glycerol 3-phosphate</name>
        <dbReference type="ChEBI" id="CHEBI:57597"/>
    </ligand>
</feature>
<feature type="binding site" evidence="1">
    <location>
        <position position="253"/>
    </location>
    <ligand>
        <name>NADPH</name>
        <dbReference type="ChEBI" id="CHEBI:57783"/>
    </ligand>
</feature>
<feature type="binding site" evidence="1">
    <location>
        <position position="253"/>
    </location>
    <ligand>
        <name>sn-glycerol 3-phosphate</name>
        <dbReference type="ChEBI" id="CHEBI:57597"/>
    </ligand>
</feature>
<feature type="binding site" evidence="1">
    <location>
        <position position="254"/>
    </location>
    <ligand>
        <name>sn-glycerol 3-phosphate</name>
        <dbReference type="ChEBI" id="CHEBI:57597"/>
    </ligand>
</feature>
<feature type="binding site" evidence="1">
    <location>
        <position position="277"/>
    </location>
    <ligand>
        <name>NADPH</name>
        <dbReference type="ChEBI" id="CHEBI:57783"/>
    </ligand>
</feature>
<feature type="binding site" evidence="1">
    <location>
        <position position="279"/>
    </location>
    <ligand>
        <name>NADPH</name>
        <dbReference type="ChEBI" id="CHEBI:57783"/>
    </ligand>
</feature>
<sequence>MNITILGAGAWGTALAMSLADRHSVMLWGRDAAVMQEAEQRRENTVYLPGFRLPDSLSLSSDFSAAIAHVGTDGLLLVATSLAGLRPLAMQLQPYAIPNIVWLCKGFEADTHLLPHQIVREVLGNDIPAGALSGPSFAQEVAQGLPCALAIASDNAALRELVVSAVHGPSMRIYSTDDVIGVEVGGAVKNILAIATGIIDGLKLGMNARAALITRGLVEITRFGVALGGRTETFMGLAGMGDLILTCTGDLSRNRKVGLGLAQGKKLEQIVTELGHVAEGVRCAQAVRSLAAERGIDMPITNAVAAVLFDGDLPREMVGRLLARDARNEMA</sequence>